<keyword id="KW-0067">ATP-binding</keyword>
<keyword id="KW-0436">Ligase</keyword>
<keyword id="KW-0479">Metal-binding</keyword>
<keyword id="KW-0547">Nucleotide-binding</keyword>
<keyword id="KW-1185">Reference proteome</keyword>
<keyword id="KW-0862">Zinc</keyword>
<name>MSHC_MICLC</name>
<protein>
    <recommendedName>
        <fullName evidence="1">L-cysteine:1D-myo-inositol 2-amino-2-deoxy-alpha-D-glucopyranoside ligase</fullName>
        <shortName evidence="1">L-Cys:GlcN-Ins ligase</shortName>
        <ecNumber evidence="1">6.3.1.13</ecNumber>
    </recommendedName>
    <alternativeName>
        <fullName evidence="1">Mycothiol ligase</fullName>
        <shortName evidence="1">MSH ligase</shortName>
    </alternativeName>
</protein>
<dbReference type="EC" id="6.3.1.13" evidence="1"/>
<dbReference type="EMBL" id="CP001628">
    <property type="protein sequence ID" value="ACS30686.1"/>
    <property type="molecule type" value="Genomic_DNA"/>
</dbReference>
<dbReference type="RefSeq" id="WP_010078675.1">
    <property type="nucleotide sequence ID" value="NC_012803.1"/>
</dbReference>
<dbReference type="SMR" id="C5CBT9"/>
<dbReference type="STRING" id="465515.Mlut_11810"/>
<dbReference type="EnsemblBacteria" id="ACS30686">
    <property type="protein sequence ID" value="ACS30686"/>
    <property type="gene ID" value="Mlut_11810"/>
</dbReference>
<dbReference type="GeneID" id="93345338"/>
<dbReference type="KEGG" id="mlu:Mlut_11810"/>
<dbReference type="PATRIC" id="fig|465515.4.peg.1122"/>
<dbReference type="eggNOG" id="COG0215">
    <property type="taxonomic scope" value="Bacteria"/>
</dbReference>
<dbReference type="HOGENOM" id="CLU_013528_0_0_11"/>
<dbReference type="Proteomes" id="UP000000738">
    <property type="component" value="Chromosome"/>
</dbReference>
<dbReference type="GO" id="GO:0005829">
    <property type="term" value="C:cytosol"/>
    <property type="evidence" value="ECO:0007669"/>
    <property type="project" value="TreeGrafter"/>
</dbReference>
<dbReference type="GO" id="GO:0005524">
    <property type="term" value="F:ATP binding"/>
    <property type="evidence" value="ECO:0007669"/>
    <property type="project" value="UniProtKB-KW"/>
</dbReference>
<dbReference type="GO" id="GO:0035446">
    <property type="term" value="F:cysteine-glucosaminylinositol ligase activity"/>
    <property type="evidence" value="ECO:0007669"/>
    <property type="project" value="UniProtKB-UniRule"/>
</dbReference>
<dbReference type="GO" id="GO:0004817">
    <property type="term" value="F:cysteine-tRNA ligase activity"/>
    <property type="evidence" value="ECO:0007669"/>
    <property type="project" value="TreeGrafter"/>
</dbReference>
<dbReference type="GO" id="GO:0008270">
    <property type="term" value="F:zinc ion binding"/>
    <property type="evidence" value="ECO:0007669"/>
    <property type="project" value="UniProtKB-UniRule"/>
</dbReference>
<dbReference type="GO" id="GO:0006423">
    <property type="term" value="P:cysteinyl-tRNA aminoacylation"/>
    <property type="evidence" value="ECO:0007669"/>
    <property type="project" value="TreeGrafter"/>
</dbReference>
<dbReference type="GO" id="GO:0010125">
    <property type="term" value="P:mycothiol biosynthetic process"/>
    <property type="evidence" value="ECO:0007669"/>
    <property type="project" value="UniProtKB-UniRule"/>
</dbReference>
<dbReference type="Gene3D" id="1.20.120.640">
    <property type="entry name" value="Anticodon-binding domain of a subclass of class I aminoacyl-tRNA synthetases"/>
    <property type="match status" value="1"/>
</dbReference>
<dbReference type="Gene3D" id="3.40.50.620">
    <property type="entry name" value="HUPs"/>
    <property type="match status" value="1"/>
</dbReference>
<dbReference type="HAMAP" id="MF_01697">
    <property type="entry name" value="MshC"/>
    <property type="match status" value="1"/>
</dbReference>
<dbReference type="InterPro" id="IPR024909">
    <property type="entry name" value="Cys-tRNA/MSH_ligase"/>
</dbReference>
<dbReference type="InterPro" id="IPR017812">
    <property type="entry name" value="Mycothiol_ligase_MshC"/>
</dbReference>
<dbReference type="InterPro" id="IPR014729">
    <property type="entry name" value="Rossmann-like_a/b/a_fold"/>
</dbReference>
<dbReference type="InterPro" id="IPR032678">
    <property type="entry name" value="tRNA-synt_1_cat_dom"/>
</dbReference>
<dbReference type="NCBIfam" id="TIGR03447">
    <property type="entry name" value="mycothiol_MshC"/>
    <property type="match status" value="1"/>
</dbReference>
<dbReference type="PANTHER" id="PTHR10890:SF3">
    <property type="entry name" value="CYSTEINE--TRNA LIGASE, CYTOPLASMIC"/>
    <property type="match status" value="1"/>
</dbReference>
<dbReference type="PANTHER" id="PTHR10890">
    <property type="entry name" value="CYSTEINYL-TRNA SYNTHETASE"/>
    <property type="match status" value="1"/>
</dbReference>
<dbReference type="Pfam" id="PF01406">
    <property type="entry name" value="tRNA-synt_1e"/>
    <property type="match status" value="1"/>
</dbReference>
<dbReference type="PRINTS" id="PR00983">
    <property type="entry name" value="TRNASYNTHCYS"/>
</dbReference>
<dbReference type="SUPFAM" id="SSF52374">
    <property type="entry name" value="Nucleotidylyl transferase"/>
    <property type="match status" value="1"/>
</dbReference>
<organism>
    <name type="scientific">Micrococcus luteus (strain ATCC 4698 / DSM 20030 / JCM 1464 / CCM 169 / CCUG 5858 / IAM 1056 / NBRC 3333 / NCIMB 9278 / NCTC 2665 / VKM Ac-2230)</name>
    <name type="common">Micrococcus lysodeikticus</name>
    <dbReference type="NCBI Taxonomy" id="465515"/>
    <lineage>
        <taxon>Bacteria</taxon>
        <taxon>Bacillati</taxon>
        <taxon>Actinomycetota</taxon>
        <taxon>Actinomycetes</taxon>
        <taxon>Micrococcales</taxon>
        <taxon>Micrococcaceae</taxon>
        <taxon>Micrococcus</taxon>
    </lineage>
</organism>
<reference key="1">
    <citation type="journal article" date="2010" name="J. Bacteriol.">
        <title>Genome sequence of the Fleming strain of Micrococcus luteus, a simple free-living actinobacterium.</title>
        <authorList>
            <person name="Young M."/>
            <person name="Artsatbanov V."/>
            <person name="Beller H.R."/>
            <person name="Chandra G."/>
            <person name="Chater K.F."/>
            <person name="Dover L.G."/>
            <person name="Goh E.B."/>
            <person name="Kahan T."/>
            <person name="Kaprelyants A.S."/>
            <person name="Kyrpides N."/>
            <person name="Lapidus A."/>
            <person name="Lowry S.R."/>
            <person name="Lykidis A."/>
            <person name="Mahillon J."/>
            <person name="Markowitz V."/>
            <person name="Mavromatis K."/>
            <person name="Mukamolova G.V."/>
            <person name="Oren A."/>
            <person name="Rokem J.S."/>
            <person name="Smith M.C."/>
            <person name="Young D.I."/>
            <person name="Greenblatt C.L."/>
        </authorList>
    </citation>
    <scope>NUCLEOTIDE SEQUENCE [LARGE SCALE GENOMIC DNA]</scope>
    <source>
        <strain>ATCC 4698 / DSM 20030 / JCM 1464 / CCM 169 / CCUG 5858 / IAM 1056 / NBRC 3333 / NCIMB 9278 / NCTC 2665 / VKM Ac-2230</strain>
    </source>
</reference>
<feature type="chain" id="PRO_0000400455" description="L-cysteine:1D-myo-inositol 2-amino-2-deoxy-alpha-D-glucopyranoside ligase">
    <location>
        <begin position="1"/>
        <end position="422"/>
    </location>
</feature>
<feature type="region of interest" description="Disordered" evidence="2">
    <location>
        <begin position="1"/>
        <end position="34"/>
    </location>
</feature>
<feature type="short sequence motif" description="'HIGH' region" evidence="1">
    <location>
        <begin position="46"/>
        <end position="56"/>
    </location>
</feature>
<feature type="short sequence motif" description="'ERGGDP' region" evidence="1">
    <location>
        <begin position="196"/>
        <end position="201"/>
    </location>
</feature>
<feature type="short sequence motif" description="'KMSKS' region" evidence="1">
    <location>
        <begin position="298"/>
        <end position="302"/>
    </location>
</feature>
<feature type="compositionally biased region" description="Basic and acidic residues" evidence="2">
    <location>
        <begin position="15"/>
        <end position="25"/>
    </location>
</feature>
<feature type="binding site" evidence="1">
    <location>
        <begin position="44"/>
        <end position="47"/>
    </location>
    <ligand>
        <name>L-cysteinyl-5'-AMP</name>
        <dbReference type="ChEBI" id="CHEBI:144924"/>
    </ligand>
</feature>
<feature type="binding site" evidence="1">
    <location>
        <position position="44"/>
    </location>
    <ligand>
        <name>Zn(2+)</name>
        <dbReference type="ChEBI" id="CHEBI:29105"/>
    </ligand>
</feature>
<feature type="binding site" evidence="1">
    <location>
        <position position="59"/>
    </location>
    <ligand>
        <name>L-cysteinyl-5'-AMP</name>
        <dbReference type="ChEBI" id="CHEBI:144924"/>
    </ligand>
</feature>
<feature type="binding site" evidence="1">
    <location>
        <begin position="82"/>
        <end position="84"/>
    </location>
    <ligand>
        <name>L-cysteinyl-5'-AMP</name>
        <dbReference type="ChEBI" id="CHEBI:144924"/>
    </ligand>
</feature>
<feature type="binding site" evidence="1">
    <location>
        <position position="237"/>
    </location>
    <ligand>
        <name>L-cysteinyl-5'-AMP</name>
        <dbReference type="ChEBI" id="CHEBI:144924"/>
    </ligand>
</feature>
<feature type="binding site" evidence="1">
    <location>
        <position position="241"/>
    </location>
    <ligand>
        <name>Zn(2+)</name>
        <dbReference type="ChEBI" id="CHEBI:29105"/>
    </ligand>
</feature>
<feature type="binding site" evidence="1">
    <location>
        <begin position="259"/>
        <end position="261"/>
    </location>
    <ligand>
        <name>L-cysteinyl-5'-AMP</name>
        <dbReference type="ChEBI" id="CHEBI:144924"/>
    </ligand>
</feature>
<feature type="binding site" evidence="1">
    <location>
        <position position="266"/>
    </location>
    <ligand>
        <name>Zn(2+)</name>
        <dbReference type="ChEBI" id="CHEBI:29105"/>
    </ligand>
</feature>
<feature type="binding site" evidence="1">
    <location>
        <position position="292"/>
    </location>
    <ligand>
        <name>L-cysteinyl-5'-AMP</name>
        <dbReference type="ChEBI" id="CHEBI:144924"/>
    </ligand>
</feature>
<evidence type="ECO:0000255" key="1">
    <source>
        <dbReference type="HAMAP-Rule" id="MF_01697"/>
    </source>
</evidence>
<evidence type="ECO:0000256" key="2">
    <source>
        <dbReference type="SAM" id="MobiDB-lite"/>
    </source>
</evidence>
<accession>C5CBT9</accession>
<comment type="function">
    <text evidence="1">Catalyzes the ATP-dependent condensation of GlcN-Ins and L-cysteine to form L-Cys-GlcN-Ins.</text>
</comment>
<comment type="catalytic activity">
    <reaction evidence="1">
        <text>1D-myo-inositol 2-amino-2-deoxy-alpha-D-glucopyranoside + L-cysteine + ATP = 1D-myo-inositol 2-(L-cysteinylamino)-2-deoxy-alpha-D-glucopyranoside + AMP + diphosphate + H(+)</text>
        <dbReference type="Rhea" id="RHEA:26176"/>
        <dbReference type="ChEBI" id="CHEBI:15378"/>
        <dbReference type="ChEBI" id="CHEBI:30616"/>
        <dbReference type="ChEBI" id="CHEBI:33019"/>
        <dbReference type="ChEBI" id="CHEBI:35235"/>
        <dbReference type="ChEBI" id="CHEBI:58886"/>
        <dbReference type="ChEBI" id="CHEBI:58887"/>
        <dbReference type="ChEBI" id="CHEBI:456215"/>
        <dbReference type="EC" id="6.3.1.13"/>
    </reaction>
</comment>
<comment type="cofactor">
    <cofactor evidence="1">
        <name>Zn(2+)</name>
        <dbReference type="ChEBI" id="CHEBI:29105"/>
    </cofactor>
    <text evidence="1">Binds 1 zinc ion per subunit.</text>
</comment>
<comment type="subunit">
    <text evidence="1">Monomer.</text>
</comment>
<comment type="similarity">
    <text evidence="1">Belongs to the class-I aminoacyl-tRNA synthetase family. MshC subfamily.</text>
</comment>
<sequence>MKSWSTPAPPTVPSRPDRLRLHDTATGRTRHPGNDGRRASLYVCGITPYDATHLGHASTYVAFDLLHRYWRAAGLEVAYVQNVTDVDDPLLERAEATGVDWRALAEEQTDLFRADMAALEVLAPDHYVGATEAVGLVVDAVETMLAAGRAYRVPGGDGEPEGDVYFDVRSAQSATDWRLGQVSAMDLDEMAAVFPERGGDPDRPGKRDPLDPLLWRVHREGEPAWDGRSLGSGRPGWHIECSVISRAHLPAPFTVQGGGSDLRFPHHEFSAAHATAVDGLPLAHTYAHTGMVALDGEKMSKSLGNLELVSRLRARGVEPVAVRAAILAHHYRSDWEWSEQVLTDAQARVTRWRAALDGPHAAAGVAVLDAVHAALSDDLDAPRALEALDAWAAGTLPGLVETAADPVPVVDVVAALLGLRLR</sequence>
<gene>
    <name evidence="1" type="primary">mshC</name>
    <name type="ordered locus">Mlut_11810</name>
</gene>
<proteinExistence type="inferred from homology"/>